<sequence length="205" mass="22965">MQAPPSFYEGDTLEVAKKLLGQKLVHIVNGIKRSGIIVEVEAYKGPDDKAAHSYGGRRTDRTEVMFGAPGHAYVYLIYGMYHCFNVITAPVGTPQGVLIRALEPVDGIEEIKLARYNKTDITKAQYKNLTNGPGKLCRALGITLEERGVSLQSDTLHIELVPEEKHISSQYKITAGPRINIDYAEEAVHYPWRFYYEGHPFVSKK</sequence>
<gene>
    <name type="ordered locus">BAMEG_3690</name>
</gene>
<comment type="similarity">
    <text evidence="1">Belongs to the DNA glycosylase MPG family.</text>
</comment>
<name>3MGH_BACAC</name>
<protein>
    <recommendedName>
        <fullName evidence="1">Putative 3-methyladenine DNA glycosylase</fullName>
        <ecNumber evidence="1">3.2.2.-</ecNumber>
    </recommendedName>
</protein>
<proteinExistence type="inferred from homology"/>
<evidence type="ECO:0000255" key="1">
    <source>
        <dbReference type="HAMAP-Rule" id="MF_00527"/>
    </source>
</evidence>
<reference key="1">
    <citation type="submission" date="2008-10" db="EMBL/GenBank/DDBJ databases">
        <title>Genome sequence of Bacillus anthracis str. CDC 684.</title>
        <authorList>
            <person name="Dodson R.J."/>
            <person name="Munk A.C."/>
            <person name="Brettin T."/>
            <person name="Bruce D."/>
            <person name="Detter C."/>
            <person name="Tapia R."/>
            <person name="Han C."/>
            <person name="Sutton G."/>
            <person name="Sims D."/>
        </authorList>
    </citation>
    <scope>NUCLEOTIDE SEQUENCE [LARGE SCALE GENOMIC DNA]</scope>
    <source>
        <strain>CDC 684 / NRRL 3495</strain>
    </source>
</reference>
<accession>C3LE50</accession>
<dbReference type="EC" id="3.2.2.-" evidence="1"/>
<dbReference type="EMBL" id="CP001215">
    <property type="protein sequence ID" value="ACP14340.1"/>
    <property type="molecule type" value="Genomic_DNA"/>
</dbReference>
<dbReference type="RefSeq" id="WP_001148814.1">
    <property type="nucleotide sequence ID" value="NC_012581.1"/>
</dbReference>
<dbReference type="SMR" id="C3LE50"/>
<dbReference type="KEGG" id="bah:BAMEG_3690"/>
<dbReference type="HOGENOM" id="CLU_060471_0_2_9"/>
<dbReference type="GO" id="GO:0003905">
    <property type="term" value="F:alkylbase DNA N-glycosylase activity"/>
    <property type="evidence" value="ECO:0007669"/>
    <property type="project" value="InterPro"/>
</dbReference>
<dbReference type="GO" id="GO:0003677">
    <property type="term" value="F:DNA binding"/>
    <property type="evidence" value="ECO:0007669"/>
    <property type="project" value="InterPro"/>
</dbReference>
<dbReference type="GO" id="GO:0006284">
    <property type="term" value="P:base-excision repair"/>
    <property type="evidence" value="ECO:0007669"/>
    <property type="project" value="InterPro"/>
</dbReference>
<dbReference type="CDD" id="cd00540">
    <property type="entry name" value="AAG"/>
    <property type="match status" value="1"/>
</dbReference>
<dbReference type="FunFam" id="3.10.300.10:FF:000001">
    <property type="entry name" value="Putative 3-methyladenine DNA glycosylase"/>
    <property type="match status" value="1"/>
</dbReference>
<dbReference type="Gene3D" id="3.10.300.10">
    <property type="entry name" value="Methylpurine-DNA glycosylase (MPG)"/>
    <property type="match status" value="1"/>
</dbReference>
<dbReference type="HAMAP" id="MF_00527">
    <property type="entry name" value="3MGH"/>
    <property type="match status" value="1"/>
</dbReference>
<dbReference type="InterPro" id="IPR011034">
    <property type="entry name" value="Formyl_transferase-like_C_sf"/>
</dbReference>
<dbReference type="InterPro" id="IPR003180">
    <property type="entry name" value="MPG"/>
</dbReference>
<dbReference type="InterPro" id="IPR036995">
    <property type="entry name" value="MPG_sf"/>
</dbReference>
<dbReference type="NCBIfam" id="TIGR00567">
    <property type="entry name" value="3mg"/>
    <property type="match status" value="1"/>
</dbReference>
<dbReference type="NCBIfam" id="NF002001">
    <property type="entry name" value="PRK00802.1-1"/>
    <property type="match status" value="1"/>
</dbReference>
<dbReference type="NCBIfam" id="NF002003">
    <property type="entry name" value="PRK00802.1-3"/>
    <property type="match status" value="1"/>
</dbReference>
<dbReference type="PANTHER" id="PTHR10429">
    <property type="entry name" value="DNA-3-METHYLADENINE GLYCOSYLASE"/>
    <property type="match status" value="1"/>
</dbReference>
<dbReference type="PANTHER" id="PTHR10429:SF0">
    <property type="entry name" value="DNA-3-METHYLADENINE GLYCOSYLASE"/>
    <property type="match status" value="1"/>
</dbReference>
<dbReference type="Pfam" id="PF02245">
    <property type="entry name" value="Pur_DNA_glyco"/>
    <property type="match status" value="1"/>
</dbReference>
<dbReference type="SUPFAM" id="SSF50486">
    <property type="entry name" value="FMT C-terminal domain-like"/>
    <property type="match status" value="1"/>
</dbReference>
<organism>
    <name type="scientific">Bacillus anthracis (strain CDC 684 / NRRL 3495)</name>
    <dbReference type="NCBI Taxonomy" id="568206"/>
    <lineage>
        <taxon>Bacteria</taxon>
        <taxon>Bacillati</taxon>
        <taxon>Bacillota</taxon>
        <taxon>Bacilli</taxon>
        <taxon>Bacillales</taxon>
        <taxon>Bacillaceae</taxon>
        <taxon>Bacillus</taxon>
        <taxon>Bacillus cereus group</taxon>
    </lineage>
</organism>
<feature type="chain" id="PRO_1000146260" description="Putative 3-methyladenine DNA glycosylase">
    <location>
        <begin position="1"/>
        <end position="205"/>
    </location>
</feature>
<keyword id="KW-0227">DNA damage</keyword>
<keyword id="KW-0234">DNA repair</keyword>
<keyword id="KW-0378">Hydrolase</keyword>